<dbReference type="EC" id="6.3.2.4" evidence="2"/>
<dbReference type="EMBL" id="AE005176">
    <property type="protein sequence ID" value="AAK04439.1"/>
    <property type="molecule type" value="Genomic_DNA"/>
</dbReference>
<dbReference type="PIR" id="E86667">
    <property type="entry name" value="E86667"/>
</dbReference>
<dbReference type="RefSeq" id="NP_266497.1">
    <property type="nucleotide sequence ID" value="NC_002662.1"/>
</dbReference>
<dbReference type="RefSeq" id="WP_010905293.1">
    <property type="nucleotide sequence ID" value="NC_002662.1"/>
</dbReference>
<dbReference type="SMR" id="Q9CIL5"/>
<dbReference type="PaxDb" id="272623-L140690"/>
<dbReference type="EnsemblBacteria" id="AAK04439">
    <property type="protein sequence ID" value="AAK04439"/>
    <property type="gene ID" value="L140690"/>
</dbReference>
<dbReference type="KEGG" id="lla:L140690"/>
<dbReference type="PATRIC" id="fig|272623.7.peg.374"/>
<dbReference type="eggNOG" id="COG1181">
    <property type="taxonomic scope" value="Bacteria"/>
</dbReference>
<dbReference type="HOGENOM" id="CLU_039268_0_0_9"/>
<dbReference type="OrthoDB" id="9813261at2"/>
<dbReference type="UniPathway" id="UPA00219"/>
<dbReference type="Proteomes" id="UP000002196">
    <property type="component" value="Chromosome"/>
</dbReference>
<dbReference type="GO" id="GO:0005829">
    <property type="term" value="C:cytosol"/>
    <property type="evidence" value="ECO:0007669"/>
    <property type="project" value="TreeGrafter"/>
</dbReference>
<dbReference type="GO" id="GO:0005524">
    <property type="term" value="F:ATP binding"/>
    <property type="evidence" value="ECO:0007669"/>
    <property type="project" value="UniProtKB-KW"/>
</dbReference>
<dbReference type="GO" id="GO:0008716">
    <property type="term" value="F:D-alanine-D-alanine ligase activity"/>
    <property type="evidence" value="ECO:0007669"/>
    <property type="project" value="UniProtKB-UniRule"/>
</dbReference>
<dbReference type="GO" id="GO:0046872">
    <property type="term" value="F:metal ion binding"/>
    <property type="evidence" value="ECO:0007669"/>
    <property type="project" value="UniProtKB-KW"/>
</dbReference>
<dbReference type="GO" id="GO:0071555">
    <property type="term" value="P:cell wall organization"/>
    <property type="evidence" value="ECO:0007669"/>
    <property type="project" value="UniProtKB-KW"/>
</dbReference>
<dbReference type="GO" id="GO:0009252">
    <property type="term" value="P:peptidoglycan biosynthetic process"/>
    <property type="evidence" value="ECO:0007669"/>
    <property type="project" value="UniProtKB-UniRule"/>
</dbReference>
<dbReference type="GO" id="GO:0008360">
    <property type="term" value="P:regulation of cell shape"/>
    <property type="evidence" value="ECO:0007669"/>
    <property type="project" value="UniProtKB-KW"/>
</dbReference>
<dbReference type="FunFam" id="3.30.1490.20:FF:000007">
    <property type="entry name" value="D-alanine--D-alanine ligase"/>
    <property type="match status" value="1"/>
</dbReference>
<dbReference type="FunFam" id="3.30.470.20:FF:000008">
    <property type="entry name" value="D-alanine--D-alanine ligase"/>
    <property type="match status" value="1"/>
</dbReference>
<dbReference type="Gene3D" id="3.40.50.20">
    <property type="match status" value="1"/>
</dbReference>
<dbReference type="Gene3D" id="3.30.1490.20">
    <property type="entry name" value="ATP-grasp fold, A domain"/>
    <property type="match status" value="1"/>
</dbReference>
<dbReference type="Gene3D" id="3.30.470.20">
    <property type="entry name" value="ATP-grasp fold, B domain"/>
    <property type="match status" value="1"/>
</dbReference>
<dbReference type="HAMAP" id="MF_00047">
    <property type="entry name" value="Dala_Dala_lig"/>
    <property type="match status" value="1"/>
</dbReference>
<dbReference type="InterPro" id="IPR011761">
    <property type="entry name" value="ATP-grasp"/>
</dbReference>
<dbReference type="InterPro" id="IPR013815">
    <property type="entry name" value="ATP_grasp_subdomain_1"/>
</dbReference>
<dbReference type="InterPro" id="IPR000291">
    <property type="entry name" value="D-Ala_lig_Van_CS"/>
</dbReference>
<dbReference type="InterPro" id="IPR005905">
    <property type="entry name" value="D_ala_D_ala"/>
</dbReference>
<dbReference type="InterPro" id="IPR011095">
    <property type="entry name" value="Dala_Dala_lig_C"/>
</dbReference>
<dbReference type="InterPro" id="IPR011127">
    <property type="entry name" value="Dala_Dala_lig_N"/>
</dbReference>
<dbReference type="InterPro" id="IPR016185">
    <property type="entry name" value="PreATP-grasp_dom_sf"/>
</dbReference>
<dbReference type="NCBIfam" id="TIGR01205">
    <property type="entry name" value="D_ala_D_alaTIGR"/>
    <property type="match status" value="1"/>
</dbReference>
<dbReference type="NCBIfam" id="NF002528">
    <property type="entry name" value="PRK01966.1-4"/>
    <property type="match status" value="1"/>
</dbReference>
<dbReference type="NCBIfam" id="NF002529">
    <property type="entry name" value="PRK01966.1-5"/>
    <property type="match status" value="1"/>
</dbReference>
<dbReference type="PANTHER" id="PTHR23132">
    <property type="entry name" value="D-ALANINE--D-ALANINE LIGASE"/>
    <property type="match status" value="1"/>
</dbReference>
<dbReference type="PANTHER" id="PTHR23132:SF25">
    <property type="entry name" value="D-ALANINE--D-ALANINE LIGASE A"/>
    <property type="match status" value="1"/>
</dbReference>
<dbReference type="Pfam" id="PF07478">
    <property type="entry name" value="Dala_Dala_lig_C"/>
    <property type="match status" value="1"/>
</dbReference>
<dbReference type="Pfam" id="PF01820">
    <property type="entry name" value="Dala_Dala_lig_N"/>
    <property type="match status" value="1"/>
</dbReference>
<dbReference type="PIRSF" id="PIRSF039102">
    <property type="entry name" value="Ddl/VanB"/>
    <property type="match status" value="1"/>
</dbReference>
<dbReference type="SUPFAM" id="SSF56059">
    <property type="entry name" value="Glutathione synthetase ATP-binding domain-like"/>
    <property type="match status" value="1"/>
</dbReference>
<dbReference type="SUPFAM" id="SSF52440">
    <property type="entry name" value="PreATP-grasp domain"/>
    <property type="match status" value="1"/>
</dbReference>
<dbReference type="PROSITE" id="PS50975">
    <property type="entry name" value="ATP_GRASP"/>
    <property type="match status" value="1"/>
</dbReference>
<dbReference type="PROSITE" id="PS00843">
    <property type="entry name" value="DALA_DALA_LIGASE_1"/>
    <property type="match status" value="1"/>
</dbReference>
<dbReference type="PROSITE" id="PS00844">
    <property type="entry name" value="DALA_DALA_LIGASE_2"/>
    <property type="match status" value="1"/>
</dbReference>
<feature type="chain" id="PRO_0000177832" description="D-alanine--D-alanine ligase">
    <location>
        <begin position="1"/>
        <end position="349"/>
    </location>
</feature>
<feature type="domain" description="ATP-grasp" evidence="2">
    <location>
        <begin position="132"/>
        <end position="335"/>
    </location>
</feature>
<feature type="binding site" evidence="2">
    <location>
        <begin position="162"/>
        <end position="217"/>
    </location>
    <ligand>
        <name>ATP</name>
        <dbReference type="ChEBI" id="CHEBI:30616"/>
    </ligand>
</feature>
<feature type="binding site" evidence="2">
    <location>
        <position position="289"/>
    </location>
    <ligand>
        <name>Mg(2+)</name>
        <dbReference type="ChEBI" id="CHEBI:18420"/>
        <label>1</label>
    </ligand>
</feature>
<feature type="binding site" evidence="2">
    <location>
        <position position="302"/>
    </location>
    <ligand>
        <name>Mg(2+)</name>
        <dbReference type="ChEBI" id="CHEBI:18420"/>
        <label>1</label>
    </ligand>
</feature>
<feature type="binding site" evidence="2">
    <location>
        <position position="302"/>
    </location>
    <ligand>
        <name>Mg(2+)</name>
        <dbReference type="ChEBI" id="CHEBI:18420"/>
        <label>2</label>
    </ligand>
</feature>
<feature type="binding site" evidence="2">
    <location>
        <position position="304"/>
    </location>
    <ligand>
        <name>Mg(2+)</name>
        <dbReference type="ChEBI" id="CHEBI:18420"/>
        <label>2</label>
    </ligand>
</feature>
<sequence length="349" mass="38693">MSKETLILLYGGRSAEREVSVLSAESVMRAVNYSRFVVKTYFITKGGEFIKTQEFTDKPAEEEKLLTNDLAESYPKISPAAIYEKAAVVFPVLHGPMGEDGSIQGFLEILRLAYVGPNILSASSTMDKLLAKHVFEAVGVPQVPYVAAFADENQGEIAQEVVEKLEFPVFVKPANMGSSVGISKVDDLADLQPALSEAYKYDNRVVIEQGVDAREIECAVLGNNSDVSATLPGEVVKDVEFYDYNSKYIDNKIQMDIPAKVPADLAQKMQEYAIKAYKAVNGTGLSRCDFFVTKDGNVYLNEINAIPGFTQWSMYPLLWENMGLSYSDLIEKLVDLAKETFETRENHLL</sequence>
<protein>
    <recommendedName>
        <fullName evidence="2">D-alanine--D-alanine ligase</fullName>
        <ecNumber evidence="2">6.3.2.4</ecNumber>
    </recommendedName>
    <alternativeName>
        <fullName evidence="2">D-Ala-D-Ala ligase</fullName>
    </alternativeName>
    <alternativeName>
        <fullName evidence="2">D-alanylalanine synthetase</fullName>
    </alternativeName>
</protein>
<evidence type="ECO:0000250" key="1"/>
<evidence type="ECO:0000255" key="2">
    <source>
        <dbReference type="HAMAP-Rule" id="MF_00047"/>
    </source>
</evidence>
<keyword id="KW-0067">ATP-binding</keyword>
<keyword id="KW-0133">Cell shape</keyword>
<keyword id="KW-0961">Cell wall biogenesis/degradation</keyword>
<keyword id="KW-0963">Cytoplasm</keyword>
<keyword id="KW-0436">Ligase</keyword>
<keyword id="KW-0460">Magnesium</keyword>
<keyword id="KW-0464">Manganese</keyword>
<keyword id="KW-0479">Metal-binding</keyword>
<keyword id="KW-0547">Nucleotide-binding</keyword>
<keyword id="KW-0573">Peptidoglycan synthesis</keyword>
<keyword id="KW-1185">Reference proteome</keyword>
<proteinExistence type="inferred from homology"/>
<organism>
    <name type="scientific">Lactococcus lactis subsp. lactis (strain IL1403)</name>
    <name type="common">Streptococcus lactis</name>
    <dbReference type="NCBI Taxonomy" id="272623"/>
    <lineage>
        <taxon>Bacteria</taxon>
        <taxon>Bacillati</taxon>
        <taxon>Bacillota</taxon>
        <taxon>Bacilli</taxon>
        <taxon>Lactobacillales</taxon>
        <taxon>Streptococcaceae</taxon>
        <taxon>Lactococcus</taxon>
    </lineage>
</organism>
<accession>Q9CIL5</accession>
<comment type="function">
    <text evidence="2">Cell wall formation.</text>
</comment>
<comment type="catalytic activity">
    <reaction evidence="2">
        <text>2 D-alanine + ATP = D-alanyl-D-alanine + ADP + phosphate + H(+)</text>
        <dbReference type="Rhea" id="RHEA:11224"/>
        <dbReference type="ChEBI" id="CHEBI:15378"/>
        <dbReference type="ChEBI" id="CHEBI:30616"/>
        <dbReference type="ChEBI" id="CHEBI:43474"/>
        <dbReference type="ChEBI" id="CHEBI:57416"/>
        <dbReference type="ChEBI" id="CHEBI:57822"/>
        <dbReference type="ChEBI" id="CHEBI:456216"/>
        <dbReference type="EC" id="6.3.2.4"/>
    </reaction>
</comment>
<comment type="cofactor">
    <cofactor evidence="1">
        <name>Mg(2+)</name>
        <dbReference type="ChEBI" id="CHEBI:18420"/>
    </cofactor>
    <cofactor evidence="1">
        <name>Mn(2+)</name>
        <dbReference type="ChEBI" id="CHEBI:29035"/>
    </cofactor>
    <text evidence="1">Binds 2 magnesium or manganese ions per subunit.</text>
</comment>
<comment type="pathway">
    <text evidence="2">Cell wall biogenesis; peptidoglycan biosynthesis.</text>
</comment>
<comment type="subcellular location">
    <subcellularLocation>
        <location evidence="2">Cytoplasm</location>
    </subcellularLocation>
</comment>
<comment type="similarity">
    <text evidence="2">Belongs to the D-alanine--D-alanine ligase family.</text>
</comment>
<name>DDL_LACLA</name>
<gene>
    <name evidence="2" type="primary">ddl</name>
    <name type="ordered locus">LL0341</name>
    <name type="ORF">L140690</name>
</gene>
<reference key="1">
    <citation type="journal article" date="2001" name="Genome Res.">
        <title>The complete genome sequence of the lactic acid bacterium Lactococcus lactis ssp. lactis IL1403.</title>
        <authorList>
            <person name="Bolotin A."/>
            <person name="Wincker P."/>
            <person name="Mauger S."/>
            <person name="Jaillon O."/>
            <person name="Malarme K."/>
            <person name="Weissenbach J."/>
            <person name="Ehrlich S.D."/>
            <person name="Sorokin A."/>
        </authorList>
    </citation>
    <scope>NUCLEOTIDE SEQUENCE [LARGE SCALE GENOMIC DNA]</scope>
    <source>
        <strain>IL1403</strain>
    </source>
</reference>